<reference key="1">
    <citation type="journal article" date="1996" name="J. Bacteriol.">
        <title>Identification, nucleotide sequence, and characterization of PspF, the transcriptional activator of the Escherichia coli stress-induced psp operon.</title>
        <authorList>
            <person name="Jovanovic G."/>
            <person name="Weiner L."/>
            <person name="Model P."/>
        </authorList>
    </citation>
    <scope>NUCLEOTIDE SEQUENCE [GENOMIC DNA]</scope>
    <scope>FUNCTION</scope>
    <source>
        <strain>K12</strain>
    </source>
</reference>
<reference key="2">
    <citation type="journal article" date="1996" name="DNA Res.">
        <title>A 570-kb DNA sequence of the Escherichia coli K-12 genome corresponding to the 28.0-40.1 min region on the linkage map.</title>
        <authorList>
            <person name="Aiba H."/>
            <person name="Baba T."/>
            <person name="Fujita K."/>
            <person name="Hayashi K."/>
            <person name="Inada T."/>
            <person name="Isono K."/>
            <person name="Itoh T."/>
            <person name="Kasai H."/>
            <person name="Kashimoto K."/>
            <person name="Kimura S."/>
            <person name="Kitakawa M."/>
            <person name="Kitagawa M."/>
            <person name="Makino K."/>
            <person name="Miki T."/>
            <person name="Mizobuchi K."/>
            <person name="Mori H."/>
            <person name="Mori T."/>
            <person name="Motomura K."/>
            <person name="Nakade S."/>
            <person name="Nakamura Y."/>
            <person name="Nashimoto H."/>
            <person name="Nishio Y."/>
            <person name="Oshima T."/>
            <person name="Saito N."/>
            <person name="Sampei G."/>
            <person name="Seki Y."/>
            <person name="Sivasundaram S."/>
            <person name="Tagami H."/>
            <person name="Takeda J."/>
            <person name="Takemoto K."/>
            <person name="Takeuchi Y."/>
            <person name="Wada C."/>
            <person name="Yamamoto Y."/>
            <person name="Horiuchi T."/>
        </authorList>
    </citation>
    <scope>NUCLEOTIDE SEQUENCE [LARGE SCALE GENOMIC DNA]</scope>
    <source>
        <strain>K12 / W3110 / ATCC 27325 / DSM 5911</strain>
    </source>
</reference>
<reference key="3">
    <citation type="journal article" date="1997" name="Science">
        <title>The complete genome sequence of Escherichia coli K-12.</title>
        <authorList>
            <person name="Blattner F.R."/>
            <person name="Plunkett G. III"/>
            <person name="Bloch C.A."/>
            <person name="Perna N.T."/>
            <person name="Burland V."/>
            <person name="Riley M."/>
            <person name="Collado-Vides J."/>
            <person name="Glasner J.D."/>
            <person name="Rode C.K."/>
            <person name="Mayhew G.F."/>
            <person name="Gregor J."/>
            <person name="Davis N.W."/>
            <person name="Kirkpatrick H.A."/>
            <person name="Goeden M.A."/>
            <person name="Rose D.J."/>
            <person name="Mau B."/>
            <person name="Shao Y."/>
        </authorList>
    </citation>
    <scope>NUCLEOTIDE SEQUENCE [LARGE SCALE GENOMIC DNA]</scope>
    <source>
        <strain>K12 / MG1655 / ATCC 47076</strain>
    </source>
</reference>
<reference key="4">
    <citation type="journal article" date="2006" name="Mol. Syst. Biol.">
        <title>Highly accurate genome sequences of Escherichia coli K-12 strains MG1655 and W3110.</title>
        <authorList>
            <person name="Hayashi K."/>
            <person name="Morooka N."/>
            <person name="Yamamoto Y."/>
            <person name="Fujita K."/>
            <person name="Isono K."/>
            <person name="Choi S."/>
            <person name="Ohtsubo E."/>
            <person name="Baba T."/>
            <person name="Wanner B.L."/>
            <person name="Mori H."/>
            <person name="Horiuchi T."/>
        </authorList>
    </citation>
    <scope>NUCLEOTIDE SEQUENCE [LARGE SCALE GENOMIC DNA]</scope>
    <source>
        <strain>K12 / W3110 / ATCC 27325 / DSM 5911</strain>
    </source>
</reference>
<reference key="5">
    <citation type="journal article" date="1991" name="J. Mol. Biol.">
        <title>Characterization and sequence of the Escherichia coli stress-induced psp operon.</title>
        <authorList>
            <person name="Brissette J.L."/>
            <person name="Weiner L."/>
            <person name="Ripmaster T.L."/>
            <person name="Model P."/>
        </authorList>
    </citation>
    <scope>NUCLEOTIDE SEQUENCE [GENOMIC DNA] OF 1-110</scope>
    <source>
        <strain>K12</strain>
    </source>
</reference>
<reference key="6">
    <citation type="journal article" date="1994" name="Nucleic Acids Res.">
        <title>Intrinsic and extrinsic approaches for detecting genes in a bacterial genome.</title>
        <authorList>
            <person name="Borodovsky M."/>
            <person name="Rudd K.E."/>
            <person name="Koonin E.V."/>
        </authorList>
    </citation>
    <scope>IDENTIFICATION</scope>
</reference>
<reference key="7">
    <citation type="journal article" date="1994" name="Nat. Genet.">
        <title>Large scale bacterial gene discovery by similarity search.</title>
        <authorList>
            <person name="Robison K."/>
            <person name="Gilbert W."/>
            <person name="Church G.M."/>
        </authorList>
    </citation>
    <scope>IDENTIFICATION</scope>
</reference>
<reference key="8">
    <citation type="journal article" date="2004" name="J. Biol. Chem.">
        <title>Identification of a new member of the phage shock protein response in Escherichia coli, the phage shock protein G (PspG).</title>
        <authorList>
            <person name="Lloyd L.J."/>
            <person name="Jones S.E."/>
            <person name="Jovanovic G."/>
            <person name="Gyaneshwar P."/>
            <person name="Rolfe M.D."/>
            <person name="Thompson A."/>
            <person name="Hinton J.C."/>
            <person name="Buck M."/>
        </authorList>
    </citation>
    <scope>FUNCTION</scope>
    <source>
        <strain>K12 / MG1655 / ATCC 47076</strain>
    </source>
</reference>
<reference key="9">
    <citation type="journal article" date="2009" name="J. Mol. Biol.">
        <title>A lower-order oligomer form of phage shock protein A (PspA) stably associates with the hexameric AAA(+) transcription activator protein PspF for negative regulation.</title>
        <authorList>
            <person name="Joly N."/>
            <person name="Burrows P.C."/>
            <person name="Engl C."/>
            <person name="Jovanovic G."/>
            <person name="Buck M."/>
        </authorList>
    </citation>
    <scope>FUNCTION</scope>
    <scope>ACTIVITY REGULATION</scope>
    <scope>SUBUNIT</scope>
    <scope>INTERACTION WITH PSPA</scope>
</reference>
<accession>P37344</accession>
<accession>P76039</accession>
<proteinExistence type="evidence at protein level"/>
<organism>
    <name type="scientific">Escherichia coli (strain K12)</name>
    <dbReference type="NCBI Taxonomy" id="83333"/>
    <lineage>
        <taxon>Bacteria</taxon>
        <taxon>Pseudomonadati</taxon>
        <taxon>Pseudomonadota</taxon>
        <taxon>Gammaproteobacteria</taxon>
        <taxon>Enterobacterales</taxon>
        <taxon>Enterobacteriaceae</taxon>
        <taxon>Escherichia</taxon>
    </lineage>
</organism>
<sequence length="325" mass="36986">MAEYKDNLLGEANSFLEVLEQVSHLAPLDKPVLIIGERGTGKELIASRLHYLSSRWQGPFISLNCAALNENLLDSELFGHEAGAFTGAQKRHPGRFERADGGTLFLDELATAPMMVQEKLLRVIEYGELERVGGSQPLQVNVRLVCATNADLPAMVNEGTFRADLLDRLAFDVVQLPPLRERESDIMLMAEYFAIQMCREIKLPLFPGFTERARETLLNYRWPGNIRELKNVVERSVYRHGTSDYPLDDIIIDPFKRRPPEDAIAVSETTSLPTLPLDLREFQMQQEKELLQLSLQQGKYNQKRAAELLGLTYHQFRALLKKHQI</sequence>
<protein>
    <recommendedName>
        <fullName>Psp operon transcriptional activator</fullName>
    </recommendedName>
    <alternativeName>
        <fullName>Phage shock protein F</fullName>
    </alternativeName>
</protein>
<comment type="function">
    <text evidence="3 4 5">Transcriptional activator for the phage shock protein (psp) operon (pspABCDE) and pspG gene.</text>
</comment>
<comment type="activity regulation">
    <text evidence="4">ATPase activity is inhibited by interaction with PspA. Under inducing conditions, the interaction is disrupted, allowing activation of psp transcription.</text>
</comment>
<comment type="subunit">
    <text evidence="4">Forms a complex with PspA, which is composed of around 6 PspF subunits and 6 PspA subunits.</text>
</comment>
<comment type="interaction">
    <interactant intactId="EBI-1123431">
        <id>P37344</id>
    </interactant>
    <interactant intactId="EBI-1123459">
        <id>P0AFM6</id>
        <label>pspA</label>
    </interactant>
    <organismsDiffer>false</organismsDiffer>
    <experiments>6</experiments>
</comment>
<comment type="interaction">
    <interactant intactId="EBI-1123431">
        <id>P37344</id>
    </interactant>
    <interactant intactId="EBI-1123431">
        <id>P37344</id>
        <label>pspF</label>
    </interactant>
    <organismsDiffer>false</organismsDiffer>
    <experiments>2</experiments>
</comment>
<comment type="subcellular location">
    <subcellularLocation>
        <location evidence="6">Cytoplasm</location>
    </subcellularLocation>
</comment>
<name>PSPF_ECOLI</name>
<gene>
    <name type="primary">pspF</name>
    <name type="synonym">ycjB</name>
    <name type="ordered locus">b1303</name>
    <name type="ordered locus">JW1296</name>
</gene>
<feature type="chain" id="PRO_0000081329" description="Psp operon transcriptional activator">
    <location>
        <begin position="1"/>
        <end position="325"/>
    </location>
</feature>
<feature type="domain" description="Sigma-54 factor interaction" evidence="2">
    <location>
        <begin position="15"/>
        <end position="237"/>
    </location>
</feature>
<feature type="DNA-binding region" description="H-T-H motif" evidence="1">
    <location>
        <begin position="302"/>
        <end position="321"/>
    </location>
</feature>
<feature type="binding site" evidence="2">
    <location>
        <begin position="36"/>
        <end position="43"/>
    </location>
    <ligand>
        <name>ATP</name>
        <dbReference type="ChEBI" id="CHEBI:30616"/>
    </ligand>
</feature>
<feature type="binding site" evidence="2">
    <location>
        <begin position="99"/>
        <end position="108"/>
    </location>
    <ligand>
        <name>ATP</name>
        <dbReference type="ChEBI" id="CHEBI:30616"/>
    </ligand>
</feature>
<feature type="helix" evidence="10">
    <location>
        <begin position="13"/>
        <end position="25"/>
    </location>
</feature>
<feature type="strand" evidence="10">
    <location>
        <begin position="32"/>
        <end position="35"/>
    </location>
</feature>
<feature type="helix" evidence="10">
    <location>
        <begin position="42"/>
        <end position="51"/>
    </location>
</feature>
<feature type="turn" evidence="10">
    <location>
        <begin position="54"/>
        <end position="57"/>
    </location>
</feature>
<feature type="strand" evidence="10">
    <location>
        <begin position="60"/>
        <end position="64"/>
    </location>
</feature>
<feature type="turn" evidence="9">
    <location>
        <begin position="65"/>
        <end position="67"/>
    </location>
</feature>
<feature type="helix" evidence="10">
    <location>
        <begin position="70"/>
        <end position="78"/>
    </location>
</feature>
<feature type="helix" evidence="10">
    <location>
        <begin position="95"/>
        <end position="98"/>
    </location>
</feature>
<feature type="turn" evidence="10">
    <location>
        <begin position="99"/>
        <end position="101"/>
    </location>
</feature>
<feature type="strand" evidence="10">
    <location>
        <begin position="102"/>
        <end position="108"/>
    </location>
</feature>
<feature type="helix" evidence="10">
    <location>
        <begin position="109"/>
        <end position="111"/>
    </location>
</feature>
<feature type="helix" evidence="10">
    <location>
        <begin position="114"/>
        <end position="126"/>
    </location>
</feature>
<feature type="strand" evidence="7">
    <location>
        <begin position="127"/>
        <end position="129"/>
    </location>
</feature>
<feature type="strand" evidence="8">
    <location>
        <begin position="132"/>
        <end position="135"/>
    </location>
</feature>
<feature type="strand" evidence="10">
    <location>
        <begin position="143"/>
        <end position="148"/>
    </location>
</feature>
<feature type="helix" evidence="10">
    <location>
        <begin position="152"/>
        <end position="158"/>
    </location>
</feature>
<feature type="helix" evidence="10">
    <location>
        <begin position="163"/>
        <end position="169"/>
    </location>
</feature>
<feature type="strand" evidence="10">
    <location>
        <begin position="171"/>
        <end position="175"/>
    </location>
</feature>
<feature type="helix" evidence="10">
    <location>
        <begin position="179"/>
        <end position="181"/>
    </location>
</feature>
<feature type="helix" evidence="10">
    <location>
        <begin position="183"/>
        <end position="200"/>
    </location>
</feature>
<feature type="helix" evidence="10">
    <location>
        <begin position="211"/>
        <end position="219"/>
    </location>
</feature>
<feature type="helix" evidence="10">
    <location>
        <begin position="225"/>
        <end position="240"/>
    </location>
</feature>
<feature type="strand" evidence="10">
    <location>
        <begin position="243"/>
        <end position="245"/>
    </location>
</feature>
<feature type="turn" evidence="7">
    <location>
        <begin position="254"/>
        <end position="256"/>
    </location>
</feature>
<keyword id="KW-0002">3D-structure</keyword>
<keyword id="KW-0010">Activator</keyword>
<keyword id="KW-0067">ATP-binding</keyword>
<keyword id="KW-0963">Cytoplasm</keyword>
<keyword id="KW-0238">DNA-binding</keyword>
<keyword id="KW-0547">Nucleotide-binding</keyword>
<keyword id="KW-1185">Reference proteome</keyword>
<keyword id="KW-0804">Transcription</keyword>
<keyword id="KW-0805">Transcription regulation</keyword>
<keyword id="KW-0902">Two-component regulatory system</keyword>
<dbReference type="EMBL" id="U38542">
    <property type="protein sequence ID" value="AAB02186.1"/>
    <property type="molecule type" value="Genomic_DNA"/>
</dbReference>
<dbReference type="EMBL" id="U00096">
    <property type="protein sequence ID" value="AAC74385.2"/>
    <property type="molecule type" value="Genomic_DNA"/>
</dbReference>
<dbReference type="EMBL" id="AP009048">
    <property type="protein sequence ID" value="BAA14872.1"/>
    <property type="molecule type" value="Genomic_DNA"/>
</dbReference>
<dbReference type="EMBL" id="X57560">
    <property type="status" value="NOT_ANNOTATED_CDS"/>
    <property type="molecule type" value="Genomic_DNA"/>
</dbReference>
<dbReference type="PIR" id="B64879">
    <property type="entry name" value="B64879"/>
</dbReference>
<dbReference type="RefSeq" id="NP_415819.4">
    <property type="nucleotide sequence ID" value="NC_000913.3"/>
</dbReference>
<dbReference type="RefSeq" id="WP_001301108.1">
    <property type="nucleotide sequence ID" value="NZ_SSZK01000012.1"/>
</dbReference>
<dbReference type="PDB" id="2BJV">
    <property type="method" value="X-ray"/>
    <property type="resolution" value="1.70 A"/>
    <property type="chains" value="A=1-265"/>
</dbReference>
<dbReference type="PDB" id="2BJW">
    <property type="method" value="X-ray"/>
    <property type="resolution" value="1.75 A"/>
    <property type="chains" value="A=1-265"/>
</dbReference>
<dbReference type="PDB" id="2C96">
    <property type="method" value="X-ray"/>
    <property type="resolution" value="1.80 A"/>
    <property type="chains" value="A=1-265"/>
</dbReference>
<dbReference type="PDB" id="2C98">
    <property type="method" value="X-ray"/>
    <property type="resolution" value="1.90 A"/>
    <property type="chains" value="A=1-265"/>
</dbReference>
<dbReference type="PDB" id="2C99">
    <property type="method" value="X-ray"/>
    <property type="resolution" value="1.90 A"/>
    <property type="chains" value="A=1-265"/>
</dbReference>
<dbReference type="PDB" id="2C9C">
    <property type="method" value="X-ray"/>
    <property type="resolution" value="2.10 A"/>
    <property type="chains" value="A=1-265"/>
</dbReference>
<dbReference type="PDB" id="2VII">
    <property type="method" value="X-ray"/>
    <property type="resolution" value="2.85 A"/>
    <property type="chains" value="A=1-259"/>
</dbReference>
<dbReference type="PDB" id="4QNM">
    <property type="method" value="X-ray"/>
    <property type="resolution" value="1.63 A"/>
    <property type="chains" value="A=1-265"/>
</dbReference>
<dbReference type="PDB" id="4QNR">
    <property type="method" value="X-ray"/>
    <property type="resolution" value="1.54 A"/>
    <property type="chains" value="A=1-265"/>
</dbReference>
<dbReference type="PDB" id="4QOS">
    <property type="method" value="X-ray"/>
    <property type="resolution" value="1.42 A"/>
    <property type="chains" value="A=1-265"/>
</dbReference>
<dbReference type="PDB" id="5NSS">
    <property type="method" value="EM"/>
    <property type="resolution" value="5.80 A"/>
    <property type="chains" value="F/G/J/K/L/N=1-275"/>
</dbReference>
<dbReference type="PDB" id="7QV9">
    <property type="method" value="EM"/>
    <property type="resolution" value="3.50 A"/>
    <property type="chains" value="a/b/c/d/e/f=1-275"/>
</dbReference>
<dbReference type="PDBsum" id="2BJV"/>
<dbReference type="PDBsum" id="2BJW"/>
<dbReference type="PDBsum" id="2C96"/>
<dbReference type="PDBsum" id="2C98"/>
<dbReference type="PDBsum" id="2C99"/>
<dbReference type="PDBsum" id="2C9C"/>
<dbReference type="PDBsum" id="2VII"/>
<dbReference type="PDBsum" id="4QNM"/>
<dbReference type="PDBsum" id="4QNR"/>
<dbReference type="PDBsum" id="4QOS"/>
<dbReference type="PDBsum" id="5NSS"/>
<dbReference type="PDBsum" id="7QV9"/>
<dbReference type="EMDB" id="EMD-14171"/>
<dbReference type="EMDB" id="EMD-3696"/>
<dbReference type="SMR" id="P37344"/>
<dbReference type="BioGRID" id="4263525">
    <property type="interactions" value="717"/>
</dbReference>
<dbReference type="ComplexPortal" id="CPX-5745">
    <property type="entry name" value="pspAF transcription regulation complex"/>
</dbReference>
<dbReference type="DIP" id="DIP-10592N"/>
<dbReference type="FunCoup" id="P37344">
    <property type="interactions" value="139"/>
</dbReference>
<dbReference type="IntAct" id="P37344">
    <property type="interactions" value="4"/>
</dbReference>
<dbReference type="STRING" id="511145.b1303"/>
<dbReference type="jPOST" id="P37344"/>
<dbReference type="PaxDb" id="511145-b1303"/>
<dbReference type="EnsemblBacteria" id="AAC74385">
    <property type="protein sequence ID" value="AAC74385"/>
    <property type="gene ID" value="b1303"/>
</dbReference>
<dbReference type="GeneID" id="945683"/>
<dbReference type="KEGG" id="ecj:JW1296"/>
<dbReference type="KEGG" id="eco:b1303"/>
<dbReference type="KEGG" id="ecoc:C3026_07645"/>
<dbReference type="PATRIC" id="fig|1411691.4.peg.976"/>
<dbReference type="EchoBASE" id="EB2248"/>
<dbReference type="eggNOG" id="COG1221">
    <property type="taxonomic scope" value="Bacteria"/>
</dbReference>
<dbReference type="HOGENOM" id="CLU_000445_0_7_6"/>
<dbReference type="InParanoid" id="P37344"/>
<dbReference type="OMA" id="YHQLRGM"/>
<dbReference type="OrthoDB" id="9804019at2"/>
<dbReference type="PhylomeDB" id="P37344"/>
<dbReference type="BioCyc" id="EcoCyc:EG12344-MONOMER"/>
<dbReference type="EvolutionaryTrace" id="P37344"/>
<dbReference type="PRO" id="PR:P37344"/>
<dbReference type="Proteomes" id="UP000000625">
    <property type="component" value="Chromosome"/>
</dbReference>
<dbReference type="GO" id="GO:0005737">
    <property type="term" value="C:cytoplasm"/>
    <property type="evidence" value="ECO:0007669"/>
    <property type="project" value="UniProtKB-SubCell"/>
</dbReference>
<dbReference type="GO" id="GO:0032993">
    <property type="term" value="C:protein-DNA complex"/>
    <property type="evidence" value="ECO:0000318"/>
    <property type="project" value="GO_Central"/>
</dbReference>
<dbReference type="GO" id="GO:0005667">
    <property type="term" value="C:transcription regulator complex"/>
    <property type="evidence" value="ECO:0000353"/>
    <property type="project" value="ComplexPortal"/>
</dbReference>
<dbReference type="GO" id="GO:0005524">
    <property type="term" value="F:ATP binding"/>
    <property type="evidence" value="ECO:0007669"/>
    <property type="project" value="UniProtKB-KW"/>
</dbReference>
<dbReference type="GO" id="GO:0016887">
    <property type="term" value="F:ATP hydrolysis activity"/>
    <property type="evidence" value="ECO:0007669"/>
    <property type="project" value="InterPro"/>
</dbReference>
<dbReference type="GO" id="GO:0000987">
    <property type="term" value="F:cis-regulatory region sequence-specific DNA binding"/>
    <property type="evidence" value="ECO:0000318"/>
    <property type="project" value="GO_Central"/>
</dbReference>
<dbReference type="GO" id="GO:0003677">
    <property type="term" value="F:DNA binding"/>
    <property type="evidence" value="ECO:0000314"/>
    <property type="project" value="EcoCyc"/>
</dbReference>
<dbReference type="GO" id="GO:0001216">
    <property type="term" value="F:DNA-binding transcription activator activity"/>
    <property type="evidence" value="ECO:0000318"/>
    <property type="project" value="GO_Central"/>
</dbReference>
<dbReference type="GO" id="GO:0042802">
    <property type="term" value="F:identical protein binding"/>
    <property type="evidence" value="ECO:0000353"/>
    <property type="project" value="IntAct"/>
</dbReference>
<dbReference type="GO" id="GO:0043565">
    <property type="term" value="F:sequence-specific DNA binding"/>
    <property type="evidence" value="ECO:0000314"/>
    <property type="project" value="EcoCyc"/>
</dbReference>
<dbReference type="GO" id="GO:0045892">
    <property type="term" value="P:negative regulation of DNA-templated transcription"/>
    <property type="evidence" value="ECO:0000314"/>
    <property type="project" value="EcoCyc"/>
</dbReference>
<dbReference type="GO" id="GO:0000160">
    <property type="term" value="P:phosphorelay signal transduction system"/>
    <property type="evidence" value="ECO:0007669"/>
    <property type="project" value="UniProtKB-KW"/>
</dbReference>
<dbReference type="GO" id="GO:0045893">
    <property type="term" value="P:positive regulation of DNA-templated transcription"/>
    <property type="evidence" value="ECO:0000314"/>
    <property type="project" value="EcoCyc"/>
</dbReference>
<dbReference type="GO" id="GO:0080135">
    <property type="term" value="P:regulation of cellular response to stress"/>
    <property type="evidence" value="ECO:0000303"/>
    <property type="project" value="ComplexPortal"/>
</dbReference>
<dbReference type="GO" id="GO:0006355">
    <property type="term" value="P:regulation of DNA-templated transcription"/>
    <property type="evidence" value="ECO:0000314"/>
    <property type="project" value="ComplexPortal"/>
</dbReference>
<dbReference type="CDD" id="cd00009">
    <property type="entry name" value="AAA"/>
    <property type="match status" value="1"/>
</dbReference>
<dbReference type="FunFam" id="3.40.50.300:FF:000006">
    <property type="entry name" value="DNA-binding transcriptional regulator NtrC"/>
    <property type="match status" value="1"/>
</dbReference>
<dbReference type="FunFam" id="1.10.8.60:FF:000050">
    <property type="entry name" value="Psp operon transcriptional activator"/>
    <property type="match status" value="1"/>
</dbReference>
<dbReference type="Gene3D" id="1.10.8.60">
    <property type="match status" value="1"/>
</dbReference>
<dbReference type="Gene3D" id="1.10.10.60">
    <property type="entry name" value="Homeodomain-like"/>
    <property type="match status" value="1"/>
</dbReference>
<dbReference type="Gene3D" id="3.40.50.300">
    <property type="entry name" value="P-loop containing nucleotide triphosphate hydrolases"/>
    <property type="match status" value="1"/>
</dbReference>
<dbReference type="InterPro" id="IPR003593">
    <property type="entry name" value="AAA+_ATPase"/>
</dbReference>
<dbReference type="InterPro" id="IPR009057">
    <property type="entry name" value="Homeodomain-like_sf"/>
</dbReference>
<dbReference type="InterPro" id="IPR002197">
    <property type="entry name" value="HTH_Fis"/>
</dbReference>
<dbReference type="InterPro" id="IPR027417">
    <property type="entry name" value="P-loop_NTPase"/>
</dbReference>
<dbReference type="InterPro" id="IPR002078">
    <property type="entry name" value="Sigma_54_int"/>
</dbReference>
<dbReference type="InterPro" id="IPR025943">
    <property type="entry name" value="Sigma_54_int_dom_ATP-bd_2"/>
</dbReference>
<dbReference type="InterPro" id="IPR025944">
    <property type="entry name" value="Sigma_54_int_dom_CS"/>
</dbReference>
<dbReference type="InterPro" id="IPR014317">
    <property type="entry name" value="Transcription_activator_PspF"/>
</dbReference>
<dbReference type="NCBIfam" id="TIGR02974">
    <property type="entry name" value="phageshock_pspF"/>
    <property type="match status" value="1"/>
</dbReference>
<dbReference type="NCBIfam" id="NF008622">
    <property type="entry name" value="PRK11608.1"/>
    <property type="match status" value="1"/>
</dbReference>
<dbReference type="PANTHER" id="PTHR32071:SF38">
    <property type="entry name" value="PSP OPERON TRANSCRIPTIONAL ACTIVATOR"/>
    <property type="match status" value="1"/>
</dbReference>
<dbReference type="PANTHER" id="PTHR32071">
    <property type="entry name" value="TRANSCRIPTIONAL REGULATORY PROTEIN"/>
    <property type="match status" value="1"/>
</dbReference>
<dbReference type="Pfam" id="PF02954">
    <property type="entry name" value="HTH_8"/>
    <property type="match status" value="1"/>
</dbReference>
<dbReference type="Pfam" id="PF00158">
    <property type="entry name" value="Sigma54_activat"/>
    <property type="match status" value="1"/>
</dbReference>
<dbReference type="PRINTS" id="PR01590">
    <property type="entry name" value="HTHFIS"/>
</dbReference>
<dbReference type="SMART" id="SM00382">
    <property type="entry name" value="AAA"/>
    <property type="match status" value="1"/>
</dbReference>
<dbReference type="SUPFAM" id="SSF46689">
    <property type="entry name" value="Homeodomain-like"/>
    <property type="match status" value="1"/>
</dbReference>
<dbReference type="SUPFAM" id="SSF52540">
    <property type="entry name" value="P-loop containing nucleoside triphosphate hydrolases"/>
    <property type="match status" value="1"/>
</dbReference>
<dbReference type="PROSITE" id="PS00676">
    <property type="entry name" value="SIGMA54_INTERACT_2"/>
    <property type="match status" value="1"/>
</dbReference>
<dbReference type="PROSITE" id="PS00688">
    <property type="entry name" value="SIGMA54_INTERACT_3"/>
    <property type="match status" value="1"/>
</dbReference>
<dbReference type="PROSITE" id="PS50045">
    <property type="entry name" value="SIGMA54_INTERACT_4"/>
    <property type="match status" value="1"/>
</dbReference>
<evidence type="ECO:0000250" key="1"/>
<evidence type="ECO:0000255" key="2">
    <source>
        <dbReference type="PROSITE-ProRule" id="PRU00193"/>
    </source>
</evidence>
<evidence type="ECO:0000269" key="3">
    <source>
    </source>
</evidence>
<evidence type="ECO:0000269" key="4">
    <source>
    </source>
</evidence>
<evidence type="ECO:0000269" key="5">
    <source>
    </source>
</evidence>
<evidence type="ECO:0000305" key="6"/>
<evidence type="ECO:0007829" key="7">
    <source>
        <dbReference type="PDB" id="2C96"/>
    </source>
</evidence>
<evidence type="ECO:0007829" key="8">
    <source>
        <dbReference type="PDB" id="4QNM"/>
    </source>
</evidence>
<evidence type="ECO:0007829" key="9">
    <source>
        <dbReference type="PDB" id="4QNR"/>
    </source>
</evidence>
<evidence type="ECO:0007829" key="10">
    <source>
        <dbReference type="PDB" id="4QOS"/>
    </source>
</evidence>